<gene>
    <name type="ordered locus">At4g39750</name>
    <name type="ORF">T19P19.1</name>
</gene>
<reference key="1">
    <citation type="journal article" date="1999" name="Nature">
        <title>Sequence and analysis of chromosome 4 of the plant Arabidopsis thaliana.</title>
        <authorList>
            <person name="Mayer K.F.X."/>
            <person name="Schueller C."/>
            <person name="Wambutt R."/>
            <person name="Murphy G."/>
            <person name="Volckaert G."/>
            <person name="Pohl T."/>
            <person name="Duesterhoeft A."/>
            <person name="Stiekema W."/>
            <person name="Entian K.-D."/>
            <person name="Terryn N."/>
            <person name="Harris B."/>
            <person name="Ansorge W."/>
            <person name="Brandt P."/>
            <person name="Grivell L.A."/>
            <person name="Rieger M."/>
            <person name="Weichselgartner M."/>
            <person name="de Simone V."/>
            <person name="Obermaier B."/>
            <person name="Mache R."/>
            <person name="Mueller M."/>
            <person name="Kreis M."/>
            <person name="Delseny M."/>
            <person name="Puigdomenech P."/>
            <person name="Watson M."/>
            <person name="Schmidtheini T."/>
            <person name="Reichert B."/>
            <person name="Portetelle D."/>
            <person name="Perez-Alonso M."/>
            <person name="Boutry M."/>
            <person name="Bancroft I."/>
            <person name="Vos P."/>
            <person name="Hoheisel J."/>
            <person name="Zimmermann W."/>
            <person name="Wedler H."/>
            <person name="Ridley P."/>
            <person name="Langham S.-A."/>
            <person name="McCullagh B."/>
            <person name="Bilham L."/>
            <person name="Robben J."/>
            <person name="van der Schueren J."/>
            <person name="Grymonprez B."/>
            <person name="Chuang Y.-J."/>
            <person name="Vandenbussche F."/>
            <person name="Braeken M."/>
            <person name="Weltjens I."/>
            <person name="Voet M."/>
            <person name="Bastiaens I."/>
            <person name="Aert R."/>
            <person name="Defoor E."/>
            <person name="Weitzenegger T."/>
            <person name="Bothe G."/>
            <person name="Ramsperger U."/>
            <person name="Hilbert H."/>
            <person name="Braun M."/>
            <person name="Holzer E."/>
            <person name="Brandt A."/>
            <person name="Peters S."/>
            <person name="van Staveren M."/>
            <person name="Dirkse W."/>
            <person name="Mooijman P."/>
            <person name="Klein Lankhorst R."/>
            <person name="Rose M."/>
            <person name="Hauf J."/>
            <person name="Koetter P."/>
            <person name="Berneiser S."/>
            <person name="Hempel S."/>
            <person name="Feldpausch M."/>
            <person name="Lamberth S."/>
            <person name="Van den Daele H."/>
            <person name="De Keyser A."/>
            <person name="Buysshaert C."/>
            <person name="Gielen J."/>
            <person name="Villarroel R."/>
            <person name="De Clercq R."/>
            <person name="van Montagu M."/>
            <person name="Rogers J."/>
            <person name="Cronin A."/>
            <person name="Quail M.A."/>
            <person name="Bray-Allen S."/>
            <person name="Clark L."/>
            <person name="Doggett J."/>
            <person name="Hall S."/>
            <person name="Kay M."/>
            <person name="Lennard N."/>
            <person name="McLay K."/>
            <person name="Mayes R."/>
            <person name="Pettett A."/>
            <person name="Rajandream M.A."/>
            <person name="Lyne M."/>
            <person name="Benes V."/>
            <person name="Rechmann S."/>
            <person name="Borkova D."/>
            <person name="Bloecker H."/>
            <person name="Scharfe M."/>
            <person name="Grimm M."/>
            <person name="Loehnert T.-H."/>
            <person name="Dose S."/>
            <person name="de Haan M."/>
            <person name="Maarse A.C."/>
            <person name="Schaefer M."/>
            <person name="Mueller-Auer S."/>
            <person name="Gabel C."/>
            <person name="Fuchs M."/>
            <person name="Fartmann B."/>
            <person name="Granderath K."/>
            <person name="Dauner D."/>
            <person name="Herzl A."/>
            <person name="Neumann S."/>
            <person name="Argiriou A."/>
            <person name="Vitale D."/>
            <person name="Liguori R."/>
            <person name="Piravandi E."/>
            <person name="Massenet O."/>
            <person name="Quigley F."/>
            <person name="Clabauld G."/>
            <person name="Muendlein A."/>
            <person name="Felber R."/>
            <person name="Schnabl S."/>
            <person name="Hiller R."/>
            <person name="Schmidt W."/>
            <person name="Lecharny A."/>
            <person name="Aubourg S."/>
            <person name="Chefdor F."/>
            <person name="Cooke R."/>
            <person name="Berger C."/>
            <person name="Monfort A."/>
            <person name="Casacuberta E."/>
            <person name="Gibbons T."/>
            <person name="Weber N."/>
            <person name="Vandenbol M."/>
            <person name="Bargues M."/>
            <person name="Terol J."/>
            <person name="Torres A."/>
            <person name="Perez-Perez A."/>
            <person name="Purnelle B."/>
            <person name="Bent E."/>
            <person name="Johnson S."/>
            <person name="Tacon D."/>
            <person name="Jesse T."/>
            <person name="Heijnen L."/>
            <person name="Schwarz S."/>
            <person name="Scholler P."/>
            <person name="Heber S."/>
            <person name="Francs P."/>
            <person name="Bielke C."/>
            <person name="Frishman D."/>
            <person name="Haase D."/>
            <person name="Lemcke K."/>
            <person name="Mewes H.-W."/>
            <person name="Stocker S."/>
            <person name="Zaccaria P."/>
            <person name="Bevan M."/>
            <person name="Wilson R.K."/>
            <person name="de la Bastide M."/>
            <person name="Habermann K."/>
            <person name="Parnell L."/>
            <person name="Dedhia N."/>
            <person name="Gnoj L."/>
            <person name="Schutz K."/>
            <person name="Huang E."/>
            <person name="Spiegel L."/>
            <person name="Sekhon M."/>
            <person name="Murray J."/>
            <person name="Sheet P."/>
            <person name="Cordes M."/>
            <person name="Abu-Threideh J."/>
            <person name="Stoneking T."/>
            <person name="Kalicki J."/>
            <person name="Graves T."/>
            <person name="Harmon G."/>
            <person name="Edwards J."/>
            <person name="Latreille P."/>
            <person name="Courtney L."/>
            <person name="Cloud J."/>
            <person name="Abbott A."/>
            <person name="Scott K."/>
            <person name="Johnson D."/>
            <person name="Minx P."/>
            <person name="Bentley D."/>
            <person name="Fulton B."/>
            <person name="Miller N."/>
            <person name="Greco T."/>
            <person name="Kemp K."/>
            <person name="Kramer J."/>
            <person name="Fulton L."/>
            <person name="Mardis E."/>
            <person name="Dante M."/>
            <person name="Pepin K."/>
            <person name="Hillier L.W."/>
            <person name="Nelson J."/>
            <person name="Spieth J."/>
            <person name="Ryan E."/>
            <person name="Andrews S."/>
            <person name="Geisel C."/>
            <person name="Layman D."/>
            <person name="Du H."/>
            <person name="Ali J."/>
            <person name="Berghoff A."/>
            <person name="Jones K."/>
            <person name="Drone K."/>
            <person name="Cotton M."/>
            <person name="Joshu C."/>
            <person name="Antonoiu B."/>
            <person name="Zidanic M."/>
            <person name="Strong C."/>
            <person name="Sun H."/>
            <person name="Lamar B."/>
            <person name="Yordan C."/>
            <person name="Ma P."/>
            <person name="Zhong J."/>
            <person name="Preston R."/>
            <person name="Vil D."/>
            <person name="Shekher M."/>
            <person name="Matero A."/>
            <person name="Shah R."/>
            <person name="Swaby I.K."/>
            <person name="O'Shaughnessy A."/>
            <person name="Rodriguez M."/>
            <person name="Hoffman J."/>
            <person name="Till S."/>
            <person name="Granat S."/>
            <person name="Shohdy N."/>
            <person name="Hasegawa A."/>
            <person name="Hameed A."/>
            <person name="Lodhi M."/>
            <person name="Johnson A."/>
            <person name="Chen E."/>
            <person name="Marra M.A."/>
            <person name="Martienssen R."/>
            <person name="McCombie W.R."/>
        </authorList>
    </citation>
    <scope>NUCLEOTIDE SEQUENCE [LARGE SCALE GENOMIC DNA]</scope>
    <source>
        <strain>cv. Columbia</strain>
    </source>
</reference>
<reference key="2">
    <citation type="journal article" date="2017" name="Plant J.">
        <title>Araport11: a complete reannotation of the Arabidopsis thaliana reference genome.</title>
        <authorList>
            <person name="Cheng C.Y."/>
            <person name="Krishnakumar V."/>
            <person name="Chan A.P."/>
            <person name="Thibaud-Nissen F."/>
            <person name="Schobel S."/>
            <person name="Town C.D."/>
        </authorList>
    </citation>
    <scope>GENOME REANNOTATION</scope>
    <source>
        <strain>cv. Columbia</strain>
    </source>
</reference>
<name>Y4397_ARATH</name>
<comment type="sequence caution" evidence="1">
    <conflict type="erroneous gene model prediction">
        <sequence resource="EMBL-CDS" id="CAB77062"/>
    </conflict>
    <text>The predicted gene At4g39750 has been split into 3 genes: At4g39750, At4g39753 and At4g39756.</text>
</comment>
<comment type="sequence caution" evidence="1">
    <conflict type="erroneous gene model prediction">
        <sequence resource="EMBL-CDS" id="CAB80638"/>
    </conflict>
    <text>The predicted gene At4g39750 has been split into 3 genes: At4g39750, At4g39753 and At4g39756.</text>
</comment>
<organism>
    <name type="scientific">Arabidopsis thaliana</name>
    <name type="common">Mouse-ear cress</name>
    <dbReference type="NCBI Taxonomy" id="3702"/>
    <lineage>
        <taxon>Eukaryota</taxon>
        <taxon>Viridiplantae</taxon>
        <taxon>Streptophyta</taxon>
        <taxon>Embryophyta</taxon>
        <taxon>Tracheophyta</taxon>
        <taxon>Spermatophyta</taxon>
        <taxon>Magnoliopsida</taxon>
        <taxon>eudicotyledons</taxon>
        <taxon>Gunneridae</taxon>
        <taxon>Pentapetalae</taxon>
        <taxon>rosids</taxon>
        <taxon>malvids</taxon>
        <taxon>Brassicales</taxon>
        <taxon>Brassicaceae</taxon>
        <taxon>Camelineae</taxon>
        <taxon>Arabidopsis</taxon>
    </lineage>
</organism>
<feature type="chain" id="PRO_0000274933" description="Uncharacterized protein At4g39750">
    <location>
        <begin position="1"/>
        <end position="146"/>
    </location>
</feature>
<keyword id="KW-1185">Reference proteome</keyword>
<proteinExistence type="predicted"/>
<evidence type="ECO:0000305" key="1"/>
<dbReference type="EMBL" id="AL022605">
    <property type="protein sequence ID" value="CAB77062.1"/>
    <property type="status" value="ALT_SEQ"/>
    <property type="molecule type" value="Genomic_DNA"/>
</dbReference>
<dbReference type="EMBL" id="AL161595">
    <property type="protein sequence ID" value="CAB80638.1"/>
    <property type="status" value="ALT_SEQ"/>
    <property type="molecule type" value="Genomic_DNA"/>
</dbReference>
<dbReference type="EMBL" id="CP002687">
    <property type="protein sequence ID" value="AEE87113.1"/>
    <property type="molecule type" value="Genomic_DNA"/>
</dbReference>
<dbReference type="RefSeq" id="NP_568069.1">
    <property type="nucleotide sequence ID" value="NM_120136.1"/>
</dbReference>
<dbReference type="PaxDb" id="3702-AT4G39750.1"/>
<dbReference type="DNASU" id="830131"/>
<dbReference type="EnsemblPlants" id="AT4G39750.1">
    <property type="protein sequence ID" value="AT4G39750.1"/>
    <property type="gene ID" value="AT4G39750"/>
</dbReference>
<dbReference type="GeneID" id="830131"/>
<dbReference type="Gramene" id="AT4G39750.1">
    <property type="protein sequence ID" value="AT4G39750.1"/>
    <property type="gene ID" value="AT4G39750"/>
</dbReference>
<dbReference type="KEGG" id="ath:AT4G39750"/>
<dbReference type="Araport" id="AT4G39750"/>
<dbReference type="TAIR" id="AT4G39750"/>
<dbReference type="eggNOG" id="KOG1072">
    <property type="taxonomic scope" value="Eukaryota"/>
</dbReference>
<dbReference type="HOGENOM" id="CLU_1779981_0_0_1"/>
<dbReference type="InParanoid" id="Q3E9N2"/>
<dbReference type="OMA" id="MRSSKAM"/>
<dbReference type="OrthoDB" id="10269746at2759"/>
<dbReference type="PhylomeDB" id="Q3E9N2"/>
<dbReference type="PRO" id="PR:Q3E9N2"/>
<dbReference type="Proteomes" id="UP000006548">
    <property type="component" value="Chromosome 4"/>
</dbReference>
<dbReference type="ExpressionAtlas" id="Q3E9N2">
    <property type="expression patterns" value="baseline"/>
</dbReference>
<dbReference type="InterPro" id="IPR050354">
    <property type="entry name" value="F-box/kelch-repeat_ARATH"/>
</dbReference>
<dbReference type="PANTHER" id="PTHR24414">
    <property type="entry name" value="F-BOX/KELCH-REPEAT PROTEIN SKIP4"/>
    <property type="match status" value="1"/>
</dbReference>
<dbReference type="PANTHER" id="PTHR24414:SF184">
    <property type="entry name" value="GALACTOSE OXIDASE_KELCH REPEAT SUPERFAMILY PROTEIN"/>
    <property type="match status" value="1"/>
</dbReference>
<sequence>MSSEVEPPQKKKQPWLPDYIVENCLAHISRSYYPKLSLVSSPFALSSYPKSSTKRDIASTTEEYFFHVCLQLPKSPLPTWYTLWIKPDQIEKKKKINTFTGNTRLVQIPSSYHYPFDQVFIFNLYGAMRSSKAMVRPPSYGLVSMF</sequence>
<accession>Q3E9N2</accession>
<accession>Q9LDK6</accession>
<protein>
    <recommendedName>
        <fullName>Uncharacterized protein At4g39750</fullName>
    </recommendedName>
</protein>